<proteinExistence type="evidence at transcript level"/>
<keyword id="KW-0444">Lipid biosynthesis</keyword>
<keyword id="KW-0443">Lipid metabolism</keyword>
<keyword id="KW-0489">Methyltransferase</keyword>
<keyword id="KW-1185">Reference proteome</keyword>
<keyword id="KW-0949">S-adenosyl-L-methionine</keyword>
<keyword id="KW-0752">Steroid biosynthesis</keyword>
<keyword id="KW-0753">Steroid metabolism</keyword>
<keyword id="KW-0756">Sterol biosynthesis</keyword>
<keyword id="KW-1207">Sterol metabolism</keyword>
<keyword id="KW-0808">Transferase</keyword>
<organism>
    <name type="scientific">Gibberella zeae (strain ATCC MYA-4620 / CBS 123657 / FGSC 9075 / NRRL 31084 / PH-1)</name>
    <name type="common">Wheat head blight fungus</name>
    <name type="synonym">Fusarium graminearum</name>
    <dbReference type="NCBI Taxonomy" id="229533"/>
    <lineage>
        <taxon>Eukaryota</taxon>
        <taxon>Fungi</taxon>
        <taxon>Dikarya</taxon>
        <taxon>Ascomycota</taxon>
        <taxon>Pezizomycotina</taxon>
        <taxon>Sordariomycetes</taxon>
        <taxon>Hypocreomycetidae</taxon>
        <taxon>Hypocreales</taxon>
        <taxon>Nectriaceae</taxon>
        <taxon>Fusarium</taxon>
    </lineage>
</organism>
<dbReference type="EC" id="2.1.1.-" evidence="1"/>
<dbReference type="EMBL" id="HG970334">
    <property type="protein sequence ID" value="CEF87566.1"/>
    <property type="molecule type" value="Genomic_DNA"/>
</dbReference>
<dbReference type="SMR" id="A0A0E0SMA3"/>
<dbReference type="FunCoup" id="A0A0E0SMA3">
    <property type="interactions" value="310"/>
</dbReference>
<dbReference type="STRING" id="229533.A0A0E0SMA3"/>
<dbReference type="VEuPathDB" id="FungiDB:FGRAMPH1_01G18649"/>
<dbReference type="eggNOG" id="KOG1269">
    <property type="taxonomic scope" value="Eukaryota"/>
</dbReference>
<dbReference type="InParanoid" id="A0A0E0SMA3"/>
<dbReference type="UniPathway" id="UPA00768"/>
<dbReference type="Proteomes" id="UP000070720">
    <property type="component" value="Chromosome 3"/>
</dbReference>
<dbReference type="GO" id="GO:0005783">
    <property type="term" value="C:endoplasmic reticulum"/>
    <property type="evidence" value="ECO:0007669"/>
    <property type="project" value="TreeGrafter"/>
</dbReference>
<dbReference type="GO" id="GO:0003838">
    <property type="term" value="F:sterol 24-C-methyltransferase activity"/>
    <property type="evidence" value="ECO:0007669"/>
    <property type="project" value="UniProtKB-EC"/>
</dbReference>
<dbReference type="GO" id="GO:0006696">
    <property type="term" value="P:ergosterol biosynthetic process"/>
    <property type="evidence" value="ECO:0007669"/>
    <property type="project" value="TreeGrafter"/>
</dbReference>
<dbReference type="GO" id="GO:0032259">
    <property type="term" value="P:methylation"/>
    <property type="evidence" value="ECO:0007669"/>
    <property type="project" value="UniProtKB-KW"/>
</dbReference>
<dbReference type="CDD" id="cd02440">
    <property type="entry name" value="AdoMet_MTases"/>
    <property type="match status" value="1"/>
</dbReference>
<dbReference type="Gene3D" id="3.40.50.150">
    <property type="entry name" value="Vaccinia Virus protein VP39"/>
    <property type="match status" value="1"/>
</dbReference>
<dbReference type="InterPro" id="IPR050447">
    <property type="entry name" value="Erg6_SMT_methyltransf"/>
</dbReference>
<dbReference type="InterPro" id="IPR013216">
    <property type="entry name" value="Methyltransf_11"/>
</dbReference>
<dbReference type="InterPro" id="IPR030384">
    <property type="entry name" value="MeTrfase_SMT"/>
</dbReference>
<dbReference type="InterPro" id="IPR029063">
    <property type="entry name" value="SAM-dependent_MTases_sf"/>
</dbReference>
<dbReference type="InterPro" id="IPR013705">
    <property type="entry name" value="Sterol_MeTrfase_C"/>
</dbReference>
<dbReference type="PANTHER" id="PTHR44068:SF1">
    <property type="entry name" value="HYPOTHETICAL LOC100005854"/>
    <property type="match status" value="1"/>
</dbReference>
<dbReference type="PANTHER" id="PTHR44068">
    <property type="entry name" value="ZGC:194242"/>
    <property type="match status" value="1"/>
</dbReference>
<dbReference type="Pfam" id="PF08241">
    <property type="entry name" value="Methyltransf_11"/>
    <property type="match status" value="1"/>
</dbReference>
<dbReference type="Pfam" id="PF08498">
    <property type="entry name" value="Sterol_MT_C"/>
    <property type="match status" value="1"/>
</dbReference>
<dbReference type="SUPFAM" id="SSF53335">
    <property type="entry name" value="S-adenosyl-L-methionine-dependent methyltransferases"/>
    <property type="match status" value="1"/>
</dbReference>
<dbReference type="PROSITE" id="PS51685">
    <property type="entry name" value="SAM_MT_ERG6_SMT"/>
    <property type="match status" value="1"/>
</dbReference>
<evidence type="ECO:0000250" key="1">
    <source>
        <dbReference type="UniProtKB" id="Q4W9V1"/>
    </source>
</evidence>
<evidence type="ECO:0000269" key="2">
    <source>
    </source>
</evidence>
<evidence type="ECO:0000269" key="3">
    <source>
    </source>
</evidence>
<evidence type="ECO:0000269" key="4">
    <source>
    </source>
</evidence>
<evidence type="ECO:0000303" key="5">
    <source>
    </source>
</evidence>
<evidence type="ECO:0000305" key="6"/>
<evidence type="ECO:0000305" key="7">
    <source>
    </source>
</evidence>
<name>ERG6B_GIBZE</name>
<protein>
    <recommendedName>
        <fullName evidence="5">Sterol 24-C-methyltransferase ERG6B</fullName>
        <shortName evidence="6">SCMT</shortName>
        <shortName evidence="6">SMT</shortName>
        <ecNumber evidence="1">2.1.1.-</ecNumber>
    </recommendedName>
    <alternativeName>
        <fullName evidence="6">Delta(24)-sterol C-methyltransferase ERG6B</fullName>
    </alternativeName>
    <alternativeName>
        <fullName evidence="5">Ergosterol biosynthesis protein 6B</fullName>
    </alternativeName>
</protein>
<gene>
    <name evidence="5" type="primary">ERG6B</name>
    <name type="ORF">FG05740</name>
    <name type="ORF">FGRAMPH1_01T18649</name>
</gene>
<sequence>MPTTELISYDEAQNSAFDNVLHGKSKESRGGMRAMMNKDNKAHAAAVDEYFQFFDNKKAEDEVEAVRQERTDNYASLTRQYYNLATDLYEYGWSQSFHFCRFAYGESFDRAIARHEHYLAHNIGIKPGMKVLDVGCGVGGPAREIVKFTGAHVTGLNINEYQVGRAGIYAEKEGLSDKLKFVQGDFMKMPFPDNSFDAVYAIEATVHAPSLEGVYSEIRRVLKPGGIFGVYEWLMTDIYDNDDLEQRRIRLDIELGDGIAQMFKIDHGLSAIKAAGFELLHHEDLAATDDGTAPWYWPLDSDMRYAQNLSDLLTVFRMNKWGRLVMHNLIGVLEACSIAPKGTRKTADGLAKGADALVEGGKRKLFTPMYLMVGKKPEKI</sequence>
<comment type="function">
    <text evidence="1 7">Sterol 24-C-methyltransferase; part of the third module of ergosterol biosynthesis pathway that includes the late steps of the pathway (By similarity). ERG6A and ERG6B methylate lanosterol at C-24 to produce eburicol (By similarity). The third module or late pathway involves the ergosterol synthesis itself through consecutive reactions that mainly occur in the endoplasmic reticulum (ER) membrane. Firstly, the squalene synthase ERG9 catalyzes the condensation of 2 farnesyl pyrophosphate moieties to form squalene, which is the precursor of all steroids. Squalene synthase is crucial for balancing the incorporation of farnesyl diphosphate (FPP) into sterol and nonsterol isoprene synthesis. Secondly, squalene is converted into lanosterol by the consecutive action of the squalene epoxidase ERG1 and the lanosterol synthase ERG7. Then, the delta(24)-sterol C-methyltransferase ERG6 methylates lanosterol at C-24 to produce eburicol. Eburicol is the substrate of the sterol 14-alpha demethylase encoded by CYP51A, CYP51B and CYP51C, to yield 4,4,24-trimethyl ergosta-8,14,24(28)-trienol. CYP51B encodes the enzyme primarily responsible for sterol 14-alpha-demethylation, and plays an essential role in ascospore formation. CYP51A encodes an additional sterol 14-alpha-demethylase, induced on ergosterol depletion and responsible for the intrinsic variation in azole sensitivity. The third CYP51 isoform, CYP51C, does not encode a sterol 14-alpha-demethylase, but is required for full virulence on host wheat ears. The C-14 reductase ERG24 then reduces the C14=C15 double bond which leads to 4,4-dimethylfecosterol. A sequence of further demethylations at C-4, involving the C-4 demethylation complex containing the C-4 methylsterol oxidases ERG25, the sterol-4-alpha-carboxylate 3-dehydrogenase ERG26 and the 3-keto-steroid reductase ERG27, leads to the production of fecosterol via 4-methylfecosterol. ERG28 has a role as a scaffold to help anchor ERG25, ERG26 and ERG27 to the endoplasmic reticulum. The C-8 sterol isomerase ERG2 then catalyzes the reaction which results in unsaturation at C-7 in the B ring of sterols and thus converts fecosterol to episterol. The sterol-C5-desaturases ERG3A and ERG3BB then catalyze the introduction of a C-5 double bond in the B ring to produce 5-dehydroepisterol. The C-22 sterol desaturases ERG5A and ERG5B further convert 5-dehydroepisterol into ergosta-5,7,22,24(28)-tetraen-3beta-ol by forming the C-22(23) double bond in the sterol side chain. Finally, ergosta-5,7,22,24(28)-tetraen-3beta-ol is substrate of the C-24(28) sterol reductase ERG4 to produce ergosterol (Probable).</text>
</comment>
<comment type="catalytic activity">
    <reaction evidence="1">
        <text>lanosterol + S-adenosyl-L-methionine = eburicol + S-adenosyl-L-homocysteine + H(+)</text>
        <dbReference type="Rhea" id="RHEA:52652"/>
        <dbReference type="ChEBI" id="CHEBI:15378"/>
        <dbReference type="ChEBI" id="CHEBI:16521"/>
        <dbReference type="ChEBI" id="CHEBI:57856"/>
        <dbReference type="ChEBI" id="CHEBI:59789"/>
        <dbReference type="ChEBI" id="CHEBI:70315"/>
    </reaction>
    <physiologicalReaction direction="left-to-right" evidence="1">
        <dbReference type="Rhea" id="RHEA:52653"/>
    </physiologicalReaction>
</comment>
<comment type="pathway">
    <text evidence="7">Steroid metabolism; ergosterol biosynthesis.</text>
</comment>
<comment type="induction">
    <text evidence="2 4">Expression is increased in the absence of the C-24(28) sterol reductase ERG4 (PubMed:22947191). Expression is positively regulated by the FgSR transcription factor that targets gene promoters containing 2 conserved CGAA repeat sequences (PubMed:30874562).</text>
</comment>
<comment type="miscellaneous">
    <text evidence="3">In Fusarium, the biosynthesis pathway of the sterol precursors leading to the prevalent sterol ergosterol differs from yeast. The ringsystem of lanosterol in S.cerevisiae is firstly demethylised in three enzymatic steps leading to the intermediate zymosterol and secondly a methyl group is added to zymosterol by the sterol 24-C-methyltransferase to form fecosterol. In Fusarium, lanosterol is firstly transmethylated by the sterol 24-C-methyltransferase leading to the intermediate eburicol and secondly demethylated in three steps to form fecosterol.</text>
</comment>
<comment type="similarity">
    <text evidence="6">Belongs to the class I-like SAM-binding methyltransferase superfamily. Erg6/SMT family.</text>
</comment>
<accession>A0A0E0SMA3</accession>
<feature type="chain" id="PRO_0000454368" description="Sterol 24-C-methyltransferase ERG6B">
    <location>
        <begin position="1"/>
        <end position="380"/>
    </location>
</feature>
<reference key="1">
    <citation type="journal article" date="2007" name="Science">
        <title>The Fusarium graminearum genome reveals a link between localized polymorphism and pathogen specialization.</title>
        <authorList>
            <person name="Cuomo C.A."/>
            <person name="Gueldener U."/>
            <person name="Xu J.-R."/>
            <person name="Trail F."/>
            <person name="Turgeon B.G."/>
            <person name="Di Pietro A."/>
            <person name="Walton J.D."/>
            <person name="Ma L.-J."/>
            <person name="Baker S.E."/>
            <person name="Rep M."/>
            <person name="Adam G."/>
            <person name="Antoniw J."/>
            <person name="Baldwin T."/>
            <person name="Calvo S.E."/>
            <person name="Chang Y.-L."/>
            <person name="DeCaprio D."/>
            <person name="Gale L.R."/>
            <person name="Gnerre S."/>
            <person name="Goswami R.S."/>
            <person name="Hammond-Kosack K."/>
            <person name="Harris L.J."/>
            <person name="Hilburn K."/>
            <person name="Kennell J.C."/>
            <person name="Kroken S."/>
            <person name="Magnuson J.K."/>
            <person name="Mannhaupt G."/>
            <person name="Mauceli E.W."/>
            <person name="Mewes H.-W."/>
            <person name="Mitterbauer R."/>
            <person name="Muehlbauer G."/>
            <person name="Muensterkoetter M."/>
            <person name="Nelson D."/>
            <person name="O'Donnell K."/>
            <person name="Ouellet T."/>
            <person name="Qi W."/>
            <person name="Quesneville H."/>
            <person name="Roncero M.I.G."/>
            <person name="Seong K.-Y."/>
            <person name="Tetko I.V."/>
            <person name="Urban M."/>
            <person name="Waalwijk C."/>
            <person name="Ward T.J."/>
            <person name="Yao J."/>
            <person name="Birren B.W."/>
            <person name="Kistler H.C."/>
        </authorList>
    </citation>
    <scope>NUCLEOTIDE SEQUENCE [LARGE SCALE GENOMIC DNA]</scope>
    <source>
        <strain>ATCC MYA-4620 / CBS 123657 / FGSC 9075 / NRRL 31084 / PH-1</strain>
    </source>
</reference>
<reference key="2">
    <citation type="journal article" date="2010" name="Nature">
        <title>Comparative genomics reveals mobile pathogenicity chromosomes in Fusarium.</title>
        <authorList>
            <person name="Ma L.-J."/>
            <person name="van der Does H.C."/>
            <person name="Borkovich K.A."/>
            <person name="Coleman J.J."/>
            <person name="Daboussi M.-J."/>
            <person name="Di Pietro A."/>
            <person name="Dufresne M."/>
            <person name="Freitag M."/>
            <person name="Grabherr M."/>
            <person name="Henrissat B."/>
            <person name="Houterman P.M."/>
            <person name="Kang S."/>
            <person name="Shim W.-B."/>
            <person name="Woloshuk C."/>
            <person name="Xie X."/>
            <person name="Xu J.-R."/>
            <person name="Antoniw J."/>
            <person name="Baker S.E."/>
            <person name="Bluhm B.H."/>
            <person name="Breakspear A."/>
            <person name="Brown D.W."/>
            <person name="Butchko R.A.E."/>
            <person name="Chapman S."/>
            <person name="Coulson R."/>
            <person name="Coutinho P.M."/>
            <person name="Danchin E.G.J."/>
            <person name="Diener A."/>
            <person name="Gale L.R."/>
            <person name="Gardiner D.M."/>
            <person name="Goff S."/>
            <person name="Hammond-Kosack K.E."/>
            <person name="Hilburn K."/>
            <person name="Hua-Van A."/>
            <person name="Jonkers W."/>
            <person name="Kazan K."/>
            <person name="Kodira C.D."/>
            <person name="Koehrsen M."/>
            <person name="Kumar L."/>
            <person name="Lee Y.-H."/>
            <person name="Li L."/>
            <person name="Manners J.M."/>
            <person name="Miranda-Saavedra D."/>
            <person name="Mukherjee M."/>
            <person name="Park G."/>
            <person name="Park J."/>
            <person name="Park S.-Y."/>
            <person name="Proctor R.H."/>
            <person name="Regev A."/>
            <person name="Ruiz-Roldan M.C."/>
            <person name="Sain D."/>
            <person name="Sakthikumar S."/>
            <person name="Sykes S."/>
            <person name="Schwartz D.C."/>
            <person name="Turgeon B.G."/>
            <person name="Wapinski I."/>
            <person name="Yoder O."/>
            <person name="Young S."/>
            <person name="Zeng Q."/>
            <person name="Zhou S."/>
            <person name="Galagan J."/>
            <person name="Cuomo C.A."/>
            <person name="Kistler H.C."/>
            <person name="Rep M."/>
        </authorList>
    </citation>
    <scope>GENOME REANNOTATION</scope>
    <source>
        <strain>ATCC MYA-4620 / CBS 123657 / FGSC 9075 / NRRL 31084 / PH-1</strain>
    </source>
</reference>
<reference key="3">
    <citation type="journal article" date="2015" name="BMC Genomics">
        <title>The completed genome sequence of the pathogenic ascomycete fungus Fusarium graminearum.</title>
        <authorList>
            <person name="King R."/>
            <person name="Urban M."/>
            <person name="Hammond-Kosack M.C.U."/>
            <person name="Hassani-Pak K."/>
            <person name="Hammond-Kosack K.E."/>
        </authorList>
    </citation>
    <scope>NUCLEOTIDE SEQUENCE [LARGE SCALE GENOMIC DNA]</scope>
    <source>
        <strain>ATCC MYA-4620 / CBS 123657 / FGSC 9075 / NRRL 31084 / PH-1</strain>
    </source>
</reference>
<reference key="4">
    <citation type="journal article" date="2013" name="Mol. Plant Pathol.">
        <title>Involvement of FgERG4 in ergosterol biosynthesis, vegetative differentiation and virulence in Fusarium graminearum.</title>
        <authorList>
            <person name="Liu X."/>
            <person name="Jiang J."/>
            <person name="Yin Y."/>
            <person name="Ma Z."/>
        </authorList>
    </citation>
    <scope>INDUCTION</scope>
</reference>
<reference key="5">
    <citation type="journal article" date="2013" name="New Phytol.">
        <title>Characterization of the sterol 14alpha-demethylases of Fusarium graminearum identifies a novel genus-specific CYP51 function.</title>
        <authorList>
            <person name="Fan J."/>
            <person name="Urban M."/>
            <person name="Parker J.E."/>
            <person name="Brewer H.C."/>
            <person name="Kelly S.L."/>
            <person name="Hammond-Kosack K.E."/>
            <person name="Fraaije B.A."/>
            <person name="Liu X."/>
            <person name="Cools H.J."/>
        </authorList>
    </citation>
    <scope>FUNCTION</scope>
    <scope>PATHWAY</scope>
</reference>
<reference key="6">
    <citation type="journal article" date="2019" name="Nat. Commun.">
        <title>A phosphorylated transcription factor regulates sterol biosynthesis in Fusarium graminearum.</title>
        <authorList>
            <person name="Liu Z."/>
            <person name="Jian Y."/>
            <person name="Chen Y."/>
            <person name="Kistler H.C."/>
            <person name="He P."/>
            <person name="Ma Z."/>
            <person name="Yin Y."/>
        </authorList>
    </citation>
    <scope>INDUCTION</scope>
</reference>